<feature type="chain" id="PRO_0000427773" description="Probable transport protein MmpL12">
    <location>
        <begin position="1"/>
        <end position="1146"/>
    </location>
</feature>
<feature type="transmembrane region" description="Helical" evidence="1">
    <location>
        <begin position="25"/>
        <end position="45"/>
    </location>
</feature>
<feature type="transmembrane region" description="Helical" evidence="1">
    <location>
        <begin position="206"/>
        <end position="226"/>
    </location>
</feature>
<feature type="transmembrane region" description="Helical" evidence="1">
    <location>
        <begin position="254"/>
        <end position="274"/>
    </location>
</feature>
<feature type="transmembrane region" description="Helical" evidence="1">
    <location>
        <begin position="298"/>
        <end position="318"/>
    </location>
</feature>
<feature type="transmembrane region" description="Helical" evidence="1">
    <location>
        <begin position="330"/>
        <end position="350"/>
    </location>
</feature>
<feature type="transmembrane region" description="Helical" evidence="1">
    <location>
        <begin position="382"/>
        <end position="402"/>
    </location>
</feature>
<feature type="transmembrane region" description="Helical" evidence="1">
    <location>
        <begin position="826"/>
        <end position="846"/>
    </location>
</feature>
<feature type="transmembrane region" description="Helical" evidence="1">
    <location>
        <begin position="850"/>
        <end position="870"/>
    </location>
</feature>
<feature type="transmembrane region" description="Helical" evidence="1">
    <location>
        <begin position="883"/>
        <end position="903"/>
    </location>
</feature>
<feature type="transmembrane region" description="Helical" evidence="1">
    <location>
        <begin position="928"/>
        <end position="948"/>
    </location>
</feature>
<feature type="transmembrane region" description="Helical" evidence="1">
    <location>
        <begin position="949"/>
        <end position="969"/>
    </location>
</feature>
<reference key="1">
    <citation type="journal article" date="2002" name="J. Bacteriol.">
        <title>Whole-genome comparison of Mycobacterium tuberculosis clinical and laboratory strains.</title>
        <authorList>
            <person name="Fleischmann R.D."/>
            <person name="Alland D."/>
            <person name="Eisen J.A."/>
            <person name="Carpenter L."/>
            <person name="White O."/>
            <person name="Peterson J.D."/>
            <person name="DeBoy R.T."/>
            <person name="Dodson R.J."/>
            <person name="Gwinn M.L."/>
            <person name="Haft D.H."/>
            <person name="Hickey E.K."/>
            <person name="Kolonay J.F."/>
            <person name="Nelson W.C."/>
            <person name="Umayam L.A."/>
            <person name="Ermolaeva M.D."/>
            <person name="Salzberg S.L."/>
            <person name="Delcher A."/>
            <person name="Utterback T.R."/>
            <person name="Weidman J.F."/>
            <person name="Khouri H.M."/>
            <person name="Gill J."/>
            <person name="Mikula A."/>
            <person name="Bishai W."/>
            <person name="Jacobs W.R. Jr."/>
            <person name="Venter J.C."/>
            <person name="Fraser C.M."/>
        </authorList>
    </citation>
    <scope>NUCLEOTIDE SEQUENCE [LARGE SCALE GENOMIC DNA]</scope>
    <source>
        <strain>CDC 1551 / Oshkosh</strain>
    </source>
</reference>
<accession>P9WJT6</accession>
<accession>L0T6X0</accession>
<accession>Q50585</accession>
<protein>
    <recommendedName>
        <fullName evidence="2">Probable transport protein MmpL12</fullName>
    </recommendedName>
</protein>
<dbReference type="EMBL" id="AE000516">
    <property type="protein sequence ID" value="AAK45840.1"/>
    <property type="molecule type" value="Genomic_DNA"/>
</dbReference>
<dbReference type="PIR" id="B70723">
    <property type="entry name" value="B70723"/>
</dbReference>
<dbReference type="RefSeq" id="WP_003898915.1">
    <property type="nucleotide sequence ID" value="NZ_KK341227.1"/>
</dbReference>
<dbReference type="SMR" id="P9WJT6"/>
<dbReference type="KEGG" id="mtc:MT1573"/>
<dbReference type="PATRIC" id="fig|83331.31.peg.1694"/>
<dbReference type="HOGENOM" id="CLU_005108_3_0_11"/>
<dbReference type="Proteomes" id="UP000001020">
    <property type="component" value="Chromosome"/>
</dbReference>
<dbReference type="GO" id="GO:0005886">
    <property type="term" value="C:plasma membrane"/>
    <property type="evidence" value="ECO:0007669"/>
    <property type="project" value="UniProtKB-SubCell"/>
</dbReference>
<dbReference type="FunFam" id="1.20.1640.10:FF:000018">
    <property type="entry name" value="Transmembrane transport protein MmpL10"/>
    <property type="match status" value="1"/>
</dbReference>
<dbReference type="FunFam" id="1.20.1640.10:FF:000020">
    <property type="entry name" value="Transmembrane transport protein MmpL10"/>
    <property type="match status" value="1"/>
</dbReference>
<dbReference type="Gene3D" id="1.20.1640.10">
    <property type="entry name" value="Multidrug efflux transporter AcrB transmembrane domain"/>
    <property type="match status" value="2"/>
</dbReference>
<dbReference type="InterPro" id="IPR004869">
    <property type="entry name" value="MMPL_dom"/>
</dbReference>
<dbReference type="InterPro" id="IPR004707">
    <property type="entry name" value="MmpL_fam"/>
</dbReference>
<dbReference type="InterPro" id="IPR050545">
    <property type="entry name" value="Mycobact_MmpL"/>
</dbReference>
<dbReference type="InterPro" id="IPR000731">
    <property type="entry name" value="SSD"/>
</dbReference>
<dbReference type="NCBIfam" id="TIGR00833">
    <property type="entry name" value="actII"/>
    <property type="match status" value="1"/>
</dbReference>
<dbReference type="PANTHER" id="PTHR33406">
    <property type="entry name" value="MEMBRANE PROTEIN MJ1562-RELATED"/>
    <property type="match status" value="1"/>
</dbReference>
<dbReference type="PANTHER" id="PTHR33406:SF6">
    <property type="entry name" value="MEMBRANE PROTEIN YDGH-RELATED"/>
    <property type="match status" value="1"/>
</dbReference>
<dbReference type="Pfam" id="PF03176">
    <property type="entry name" value="MMPL"/>
    <property type="match status" value="2"/>
</dbReference>
<dbReference type="SUPFAM" id="SSF82866">
    <property type="entry name" value="Multidrug efflux transporter AcrB transmembrane domain"/>
    <property type="match status" value="2"/>
</dbReference>
<dbReference type="PROSITE" id="PS50156">
    <property type="entry name" value="SSD"/>
    <property type="match status" value="1"/>
</dbReference>
<evidence type="ECO:0000255" key="1"/>
<evidence type="ECO:0000305" key="2"/>
<sequence length="1146" mass="122430">MARHDEAKAGGLFDRIGNFVVRWPLIVIGCWIAVAAALTLLLPTLQAQAAKREQAPLPPGAPSMVLQKEMSAAFQEKIETSALLLVLLTNENGLGPADEAVYRKLIENLRADTQDKISVQDFLAVPEMKELLASKDNKAWNLPITFAGDAASPETQAAFKRVAAIVKQTVAGTSLTVHLSGPIATVADLTELGEKDVRIIEIGTAVSVLIILILVYRNLVTMLVPLATIGASVVTAQGTLSGLAEFGLAVNMQAIVFMSAVMIGAGTDYAVFLISRYHDYVRHGEKSDMAVKKALMSIGKVITASAATVAVTFLAMVFTKLEVFSAVGPAIAVAITVSLLGAVTLLPAILTLTGRRGWIKPRRDLTSRMWRRSGVRIVRRSTIHLVGSLIVLVALAGCTLLIRFNYDDLKTVPQHVESVKGYEAMNRHFPMNAMTPMVLFIKSPRDLRTPGALADIEMMSREIAELPNIVMVRGLTRPNGEPLKETKVSFQAGEVGGKLDEATTLLEEHGGELDQLTGGAHQLADALAQIRNEINGAVASSSGIVNTLQAMMDLMGGDKTIRQLENASQYVGRMRALGDNLSGTVTDAEQIATWASPMVNALNSSPVCNSDPACRTSRAQLAAIVQAQDDGLLRSIRALAVTLQQTQEYQTLARTVSTLDGQLKQVVSTLKAVDGLPTKLAQMQQGANALADGSAALAAGVQELVDQVKKMGSGLNEAADFLLGIKRDADKPSMAGFNIPPQIFSRDEFKKGAQIFLSADGHAARYFVQSALNPATTEAMDQVNDILRVADSARPNTELEDATIGLAGVPTALRDIRDYYNSDMKFIVIATIVIVFLILVILLRALVAPIYLIGSVLISYLSALGIGTLVFQLILGQEMHWSLPGLSFILLVAIGADYNMLLISRIRDESPHGIRIGVIRTVGSTGGVITSAGLIFAASMFGLVGASINTMAQAGFTIGIGIVLDTFLVRTVTVPALTTMIGRANWWPSELGRDPSTPPTKADRWLRRVKGHRRKAPIPAPKPPHTKVVRNTNGHASKAATKSVPNGKPADLAEGNGEYLIDHLRRHSLPLFGYAAMPAYDVVDGVSKPNGDGAHIGKEPVDHLLGHSLPLFGLAGLPSYDRWDDTSIGEPAVGHAGSKPDAKLST</sequence>
<keyword id="KW-1003">Cell membrane</keyword>
<keyword id="KW-0472">Membrane</keyword>
<keyword id="KW-1185">Reference proteome</keyword>
<keyword id="KW-0812">Transmembrane</keyword>
<keyword id="KW-1133">Transmembrane helix</keyword>
<keyword id="KW-0813">Transport</keyword>
<comment type="subcellular location">
    <subcellularLocation>
        <location evidence="2">Cell membrane</location>
        <topology evidence="1">Multi-pass membrane protein</topology>
    </subcellularLocation>
</comment>
<comment type="similarity">
    <text evidence="2">Belongs to the resistance-nodulation-cell division (RND) (TC 2.A.6) family. MmpL subfamily.</text>
</comment>
<name>MMPLC_MYCTO</name>
<proteinExistence type="inferred from homology"/>
<organism>
    <name type="scientific">Mycobacterium tuberculosis (strain CDC 1551 / Oshkosh)</name>
    <dbReference type="NCBI Taxonomy" id="83331"/>
    <lineage>
        <taxon>Bacteria</taxon>
        <taxon>Bacillati</taxon>
        <taxon>Actinomycetota</taxon>
        <taxon>Actinomycetes</taxon>
        <taxon>Mycobacteriales</taxon>
        <taxon>Mycobacteriaceae</taxon>
        <taxon>Mycobacterium</taxon>
        <taxon>Mycobacterium tuberculosis complex</taxon>
    </lineage>
</organism>
<gene>
    <name type="primary">mmpL12</name>
    <name type="ordered locus">MT1573</name>
</gene>